<dbReference type="EC" id="4.4.1.16"/>
<dbReference type="EMBL" id="BC084987">
    <property type="protein sequence ID" value="AAH84987.1"/>
    <property type="status" value="ALT_FRAME"/>
    <property type="molecule type" value="mRNA"/>
</dbReference>
<dbReference type="RefSeq" id="NP_001011164.1">
    <property type="nucleotide sequence ID" value="NM_001011164.1"/>
</dbReference>
<dbReference type="RefSeq" id="XP_012825815.1">
    <property type="nucleotide sequence ID" value="XM_012970361.2"/>
</dbReference>
<dbReference type="RefSeq" id="XP_017949356.1">
    <property type="nucleotide sequence ID" value="XM_018093867.2"/>
</dbReference>
<dbReference type="SMR" id="Q5U4Q9"/>
<dbReference type="FunCoup" id="Q5U4Q9">
    <property type="interactions" value="539"/>
</dbReference>
<dbReference type="STRING" id="8364.ENSXETP00000010463"/>
<dbReference type="PaxDb" id="8364-ENSXETP00000026454"/>
<dbReference type="DNASU" id="496582"/>
<dbReference type="GeneID" id="496582"/>
<dbReference type="KEGG" id="xtr:496582"/>
<dbReference type="AGR" id="Xenbase:XB-GENE-485701"/>
<dbReference type="CTD" id="51540"/>
<dbReference type="Xenbase" id="XB-GENE-485701">
    <property type="gene designation" value="scly"/>
</dbReference>
<dbReference type="eggNOG" id="KOG1549">
    <property type="taxonomic scope" value="Eukaryota"/>
</dbReference>
<dbReference type="HOGENOM" id="CLU_003433_0_0_1"/>
<dbReference type="InParanoid" id="Q5U4Q9"/>
<dbReference type="OrthoDB" id="10250117at2759"/>
<dbReference type="Reactome" id="R-XTR-2408508">
    <property type="pathway name" value="Metabolism of ingested SeMet, Sec, MeSec into H2Se"/>
</dbReference>
<dbReference type="Proteomes" id="UP000008143">
    <property type="component" value="Chromosome 5"/>
</dbReference>
<dbReference type="Bgee" id="ENSXETG00000026777">
    <property type="expression patterns" value="Expressed in early embryo and 16 other cell types or tissues"/>
</dbReference>
<dbReference type="GO" id="GO:0005829">
    <property type="term" value="C:cytosol"/>
    <property type="evidence" value="ECO:0007669"/>
    <property type="project" value="UniProtKB-SubCell"/>
</dbReference>
<dbReference type="GO" id="GO:0009000">
    <property type="term" value="F:selenocysteine lyase activity"/>
    <property type="evidence" value="ECO:0007669"/>
    <property type="project" value="UniProtKB-EC"/>
</dbReference>
<dbReference type="GO" id="GO:0016740">
    <property type="term" value="F:transferase activity"/>
    <property type="evidence" value="ECO:0007669"/>
    <property type="project" value="UniProtKB-KW"/>
</dbReference>
<dbReference type="FunFam" id="3.40.640.10:FF:000083">
    <property type="entry name" value="Selenocysteine lyase"/>
    <property type="match status" value="1"/>
</dbReference>
<dbReference type="FunFam" id="3.90.1150.10:FF:000065">
    <property type="entry name" value="Selenocysteine lyase"/>
    <property type="match status" value="1"/>
</dbReference>
<dbReference type="Gene3D" id="1.10.260.50">
    <property type="match status" value="1"/>
</dbReference>
<dbReference type="Gene3D" id="3.90.1150.10">
    <property type="entry name" value="Aspartate Aminotransferase, domain 1"/>
    <property type="match status" value="1"/>
</dbReference>
<dbReference type="Gene3D" id="3.40.640.10">
    <property type="entry name" value="Type I PLP-dependent aspartate aminotransferase-like (Major domain)"/>
    <property type="match status" value="1"/>
</dbReference>
<dbReference type="InterPro" id="IPR000192">
    <property type="entry name" value="Aminotrans_V_dom"/>
</dbReference>
<dbReference type="InterPro" id="IPR016454">
    <property type="entry name" value="Cysteine_dSase"/>
</dbReference>
<dbReference type="InterPro" id="IPR015424">
    <property type="entry name" value="PyrdxlP-dep_Trfase"/>
</dbReference>
<dbReference type="InterPro" id="IPR015421">
    <property type="entry name" value="PyrdxlP-dep_Trfase_major"/>
</dbReference>
<dbReference type="InterPro" id="IPR015422">
    <property type="entry name" value="PyrdxlP-dep_Trfase_small"/>
</dbReference>
<dbReference type="PANTHER" id="PTHR11601">
    <property type="entry name" value="CYSTEINE DESULFURYLASE FAMILY MEMBER"/>
    <property type="match status" value="1"/>
</dbReference>
<dbReference type="PANTHER" id="PTHR11601:SF62">
    <property type="entry name" value="SELENOCYSTEINE LYASE"/>
    <property type="match status" value="1"/>
</dbReference>
<dbReference type="Pfam" id="PF00266">
    <property type="entry name" value="Aminotran_5"/>
    <property type="match status" value="1"/>
</dbReference>
<dbReference type="PIRSF" id="PIRSF005572">
    <property type="entry name" value="NifS"/>
    <property type="match status" value="1"/>
</dbReference>
<dbReference type="SUPFAM" id="SSF53383">
    <property type="entry name" value="PLP-dependent transferases"/>
    <property type="match status" value="1"/>
</dbReference>
<sequence length="431" mass="46993">MADAESQNGENHLPHKIYLDYNATTPPATEVVKAVEEALREAWGNPSSSYTAGCKAKELIDTARAHVAKMVGGKPEDIIFTSGGTEANNMVLFSTVENFNSTSKERQNNRVALALPHIITSNVEHDSVALPLLHLQKTHRAEITFVPVSTVTGRIEVEDIISAVRPNTCLVSIMLANNETGVIMPVGELSQCLASMSKERSAQGLPKILLHTDAAQALGKVEVDVQELGVNYLTIVGHKFYGPRIGALYVRGLGQHSSLLPMLYGGGQERNFRPGTENTPMIAGLGKAAELVFLHCAVYEAHMRRIRDYLEERLEAVFEDRIRLNSRFPGAERLPNTCNVSLLKPAMLGHEWLSHCQYLQASIGAACHSDRGDRPSPVLLNSGVPQEAATSAVRLSVGRETSQDDVDLIVRDLEQAAQLLGVNKKSLKKLP</sequence>
<reference key="1">
    <citation type="submission" date="2004-10" db="EMBL/GenBank/DDBJ databases">
        <authorList>
            <consortium name="NIH - Xenopus Gene Collection (XGC) project"/>
        </authorList>
    </citation>
    <scope>NUCLEOTIDE SEQUENCE [LARGE SCALE MRNA]</scope>
</reference>
<organism>
    <name type="scientific">Xenopus tropicalis</name>
    <name type="common">Western clawed frog</name>
    <name type="synonym">Silurana tropicalis</name>
    <dbReference type="NCBI Taxonomy" id="8364"/>
    <lineage>
        <taxon>Eukaryota</taxon>
        <taxon>Metazoa</taxon>
        <taxon>Chordata</taxon>
        <taxon>Craniata</taxon>
        <taxon>Vertebrata</taxon>
        <taxon>Euteleostomi</taxon>
        <taxon>Amphibia</taxon>
        <taxon>Batrachia</taxon>
        <taxon>Anura</taxon>
        <taxon>Pipoidea</taxon>
        <taxon>Pipidae</taxon>
        <taxon>Xenopodinae</taxon>
        <taxon>Xenopus</taxon>
        <taxon>Silurana</taxon>
    </lineage>
</organism>
<proteinExistence type="evidence at transcript level"/>
<name>SCLY_XENTR</name>
<evidence type="ECO:0000250" key="1">
    <source>
        <dbReference type="UniProtKB" id="Q68FT9"/>
    </source>
</evidence>
<evidence type="ECO:0000250" key="2">
    <source>
        <dbReference type="UniProtKB" id="Q9JLI6"/>
    </source>
</evidence>
<evidence type="ECO:0000305" key="3"/>
<feature type="chain" id="PRO_0000317016" description="Selenocysteine lyase">
    <location>
        <begin position="1"/>
        <end position="431"/>
    </location>
</feature>
<feature type="active site" description="S-selanylcysteine intermediate" evidence="1">
    <location>
        <position position="367"/>
    </location>
</feature>
<feature type="modified residue" description="N6-(pyridoxal phosphate)lysine" evidence="1">
    <location>
        <position position="239"/>
    </location>
</feature>
<comment type="function">
    <text evidence="1">Catalyzes the decomposition of L-selenocysteine to L-alanine and elemental selenium.</text>
</comment>
<comment type="catalytic activity">
    <reaction evidence="1">
        <text>L-selenocysteine + AH2 = hydrogenselenide + L-alanine + A + H(+)</text>
        <dbReference type="Rhea" id="RHEA:11632"/>
        <dbReference type="ChEBI" id="CHEBI:13193"/>
        <dbReference type="ChEBI" id="CHEBI:15378"/>
        <dbReference type="ChEBI" id="CHEBI:17499"/>
        <dbReference type="ChEBI" id="CHEBI:29317"/>
        <dbReference type="ChEBI" id="CHEBI:57843"/>
        <dbReference type="ChEBI" id="CHEBI:57972"/>
        <dbReference type="EC" id="4.4.1.16"/>
    </reaction>
    <physiologicalReaction direction="left-to-right" evidence="1">
        <dbReference type="Rhea" id="RHEA:11633"/>
    </physiologicalReaction>
</comment>
<comment type="cofactor">
    <cofactor evidence="1">
        <name>pyridoxal 5'-phosphate</name>
        <dbReference type="ChEBI" id="CHEBI:597326"/>
    </cofactor>
</comment>
<comment type="subunit">
    <text evidence="1">Homodimer.</text>
</comment>
<comment type="subcellular location">
    <subcellularLocation>
        <location evidence="2">Cytoplasm</location>
        <location evidence="2">Cytosol</location>
    </subcellularLocation>
</comment>
<comment type="similarity">
    <text evidence="3">Belongs to the class-V pyridoxal-phosphate-dependent aminotransferase family.</text>
</comment>
<comment type="sequence caution" evidence="3">
    <conflict type="frameshift">
        <sequence resource="EMBL-CDS" id="AAH84987"/>
    </conflict>
</comment>
<keyword id="KW-0963">Cytoplasm</keyword>
<keyword id="KW-0456">Lyase</keyword>
<keyword id="KW-0663">Pyridoxal phosphate</keyword>
<keyword id="KW-1185">Reference proteome</keyword>
<keyword id="KW-0808">Transferase</keyword>
<protein>
    <recommendedName>
        <fullName>Selenocysteine lyase</fullName>
        <ecNumber>4.4.1.16</ecNumber>
    </recommendedName>
</protein>
<gene>
    <name type="primary">scly</name>
</gene>
<accession>Q5U4Q9</accession>